<proteinExistence type="inferred from homology"/>
<name>HRCR_RALN1</name>
<geneLocation type="plasmid">
    <name>megaplasmid Rsp</name>
</geneLocation>
<organism>
    <name type="scientific">Ralstonia nicotianae (strain ATCC BAA-1114 / GMI1000)</name>
    <name type="common">Ralstonia solanacearum</name>
    <dbReference type="NCBI Taxonomy" id="267608"/>
    <lineage>
        <taxon>Bacteria</taxon>
        <taxon>Pseudomonadati</taxon>
        <taxon>Pseudomonadota</taxon>
        <taxon>Betaproteobacteria</taxon>
        <taxon>Burkholderiales</taxon>
        <taxon>Burkholderiaceae</taxon>
        <taxon>Ralstonia</taxon>
        <taxon>Ralstonia solanacearum species complex</taxon>
    </lineage>
</organism>
<accession>Q52488</accession>
<keyword id="KW-1003">Cell membrane</keyword>
<keyword id="KW-0928">Hypersensitive response elicitation</keyword>
<keyword id="KW-0472">Membrane</keyword>
<keyword id="KW-0614">Plasmid</keyword>
<keyword id="KW-1185">Reference proteome</keyword>
<keyword id="KW-0812">Transmembrane</keyword>
<keyword id="KW-1133">Transmembrane helix</keyword>
<sequence>MQNVEFASLIVMAVAIALLPFAAMVVTSYTKIVVVLGLLRNALGVQQVPPNMVLNGIAMIVSCFVMAPVGMEAMQRAHVQINAQGGTNITQVMPLLDAARDPFREFLNKHTNAREKAFFMRSAQQLWPPAKAAQLKDDDLIVLAPAFTLTELTSAFRIGFLLYLAFIVIDLVIANLLMALGLSQVTPSNVAIPFKLLLFVVMDGWSVLIHGLVNTYR</sequence>
<dbReference type="EMBL" id="AJ245811">
    <property type="protein sequence ID" value="CAB58247.1"/>
    <property type="molecule type" value="Genomic_DNA"/>
</dbReference>
<dbReference type="EMBL" id="AL646053">
    <property type="protein sequence ID" value="CAD18011.1"/>
    <property type="molecule type" value="Genomic_DNA"/>
</dbReference>
<dbReference type="PIR" id="S61851">
    <property type="entry name" value="S61851"/>
</dbReference>
<dbReference type="SMR" id="Q52488"/>
<dbReference type="STRING" id="267608.RSp0860"/>
<dbReference type="EnsemblBacteria" id="CAD18011">
    <property type="protein sequence ID" value="CAD18011"/>
    <property type="gene ID" value="RSp0860"/>
</dbReference>
<dbReference type="KEGG" id="rso:RSp0860"/>
<dbReference type="eggNOG" id="COG4790">
    <property type="taxonomic scope" value="Bacteria"/>
</dbReference>
<dbReference type="HOGENOM" id="CLU_042028_2_0_4"/>
<dbReference type="Proteomes" id="UP000001436">
    <property type="component" value="Plasmid megaplasmid Rsp"/>
</dbReference>
<dbReference type="GO" id="GO:0005886">
    <property type="term" value="C:plasma membrane"/>
    <property type="evidence" value="ECO:0007669"/>
    <property type="project" value="UniProtKB-SubCell"/>
</dbReference>
<dbReference type="GO" id="GO:0009306">
    <property type="term" value="P:protein secretion"/>
    <property type="evidence" value="ECO:0007669"/>
    <property type="project" value="InterPro"/>
</dbReference>
<dbReference type="GO" id="GO:0052040">
    <property type="term" value="P:symbiont-mediated perturbation of host programmed cell death"/>
    <property type="evidence" value="ECO:0007669"/>
    <property type="project" value="UniProtKB-KW"/>
</dbReference>
<dbReference type="InterPro" id="IPR005838">
    <property type="entry name" value="T3SS_IM_P"/>
</dbReference>
<dbReference type="InterPro" id="IPR005773">
    <property type="entry name" value="T3SS_YscR-like"/>
</dbReference>
<dbReference type="NCBIfam" id="NF009438">
    <property type="entry name" value="PRK12797.1"/>
    <property type="match status" value="1"/>
</dbReference>
<dbReference type="NCBIfam" id="TIGR01102">
    <property type="entry name" value="yscR"/>
    <property type="match status" value="1"/>
</dbReference>
<dbReference type="PANTHER" id="PTHR30587">
    <property type="entry name" value="FLAGELLAR BIOSYNTHETIC PROTEIN FLIP"/>
    <property type="match status" value="1"/>
</dbReference>
<dbReference type="PANTHER" id="PTHR30587:SF2">
    <property type="entry name" value="SURFACE PRESENTATION OF ANTIGENS PROTEIN SPAP"/>
    <property type="match status" value="1"/>
</dbReference>
<dbReference type="Pfam" id="PF00813">
    <property type="entry name" value="FliP"/>
    <property type="match status" value="1"/>
</dbReference>
<dbReference type="PRINTS" id="PR01302">
    <property type="entry name" value="TYPE3IMPPROT"/>
</dbReference>
<dbReference type="PROSITE" id="PS01060">
    <property type="entry name" value="FLIP_1"/>
    <property type="match status" value="1"/>
</dbReference>
<dbReference type="PROSITE" id="PS01061">
    <property type="entry name" value="FLIP_2"/>
    <property type="match status" value="1"/>
</dbReference>
<reference key="1">
    <citation type="journal article" date="1995" name="Mol. Microbiol.">
        <title>The hrp gene locus of Pseudomonas solanacearum, which controls the production of a type III secretion system, encodes eight proteins related to components of the bacterial flagellar biogenesis complex.</title>
        <authorList>
            <person name="van Gijsegem F."/>
            <person name="Gough C.L."/>
            <person name="Zischek C."/>
            <person name="Niqueux E."/>
            <person name="Arlat M."/>
            <person name="Genin S."/>
            <person name="Barberis P."/>
            <person name="German S."/>
            <person name="Castello P."/>
            <person name="Boucher C.A."/>
        </authorList>
    </citation>
    <scope>NUCLEOTIDE SEQUENCE [GENOMIC DNA]</scope>
    <source>
        <strain>ATCC BAA-1114 / GMI1000</strain>
    </source>
</reference>
<reference key="2">
    <citation type="journal article" date="2002" name="Nature">
        <title>Genome sequence of the plant pathogen Ralstonia solanacearum.</title>
        <authorList>
            <person name="Salanoubat M."/>
            <person name="Genin S."/>
            <person name="Artiguenave F."/>
            <person name="Gouzy J."/>
            <person name="Mangenot S."/>
            <person name="Arlat M."/>
            <person name="Billault A."/>
            <person name="Brottier P."/>
            <person name="Camus J.-C."/>
            <person name="Cattolico L."/>
            <person name="Chandler M."/>
            <person name="Choisne N."/>
            <person name="Claudel-Renard C."/>
            <person name="Cunnac S."/>
            <person name="Demange N."/>
            <person name="Gaspin C."/>
            <person name="Lavie M."/>
            <person name="Moisan A."/>
            <person name="Robert C."/>
            <person name="Saurin W."/>
            <person name="Schiex T."/>
            <person name="Siguier P."/>
            <person name="Thebault P."/>
            <person name="Whalen M."/>
            <person name="Wincker P."/>
            <person name="Levy M."/>
            <person name="Weissenbach J."/>
            <person name="Boucher C.A."/>
        </authorList>
    </citation>
    <scope>NUCLEOTIDE SEQUENCE [LARGE SCALE GENOMIC DNA]</scope>
    <source>
        <strain>ATCC BAA-1114 / GMI1000</strain>
    </source>
</reference>
<feature type="chain" id="PRO_0000191997" description="Hypersensitivity response secretion protein HrcR">
    <location>
        <begin position="1"/>
        <end position="217"/>
    </location>
</feature>
<feature type="transmembrane region" description="Helical" evidence="1">
    <location>
        <begin position="6"/>
        <end position="26"/>
    </location>
</feature>
<feature type="transmembrane region" description="Helical" evidence="1">
    <location>
        <begin position="52"/>
        <end position="72"/>
    </location>
</feature>
<feature type="transmembrane region" description="Helical" evidence="1">
    <location>
        <begin position="158"/>
        <end position="178"/>
    </location>
</feature>
<feature type="transmembrane region" description="Helical" evidence="1">
    <location>
        <begin position="190"/>
        <end position="210"/>
    </location>
</feature>
<protein>
    <recommendedName>
        <fullName>Hypersensitivity response secretion protein HrcR</fullName>
    </recommendedName>
</protein>
<comment type="function">
    <text>Involved in the secretion of PopA, a proteinaceous elicitor of the hypersensitivity response in plants.</text>
</comment>
<comment type="subcellular location">
    <subcellularLocation>
        <location evidence="2">Cell membrane</location>
        <topology evidence="2">Multi-pass membrane protein</topology>
    </subcellularLocation>
</comment>
<comment type="similarity">
    <text evidence="2">Belongs to the FliP/MopC/SpaP family.</text>
</comment>
<gene>
    <name type="primary">hrcR</name>
    <name type="synonym">hrpT</name>
    <name type="ordered locus">RSp0860</name>
    <name type="ORF">RS01631</name>
</gene>
<evidence type="ECO:0000255" key="1"/>
<evidence type="ECO:0000305" key="2"/>